<protein>
    <recommendedName>
        <fullName evidence="1">Holliday junction branch migration complex subunit RuvA</fullName>
    </recommendedName>
</protein>
<accession>B6EGJ3</accession>
<reference key="1">
    <citation type="journal article" date="2008" name="BMC Genomics">
        <title>The genome sequence of the fish pathogen Aliivibrio salmonicida strain LFI1238 shows extensive evidence of gene decay.</title>
        <authorList>
            <person name="Hjerde E."/>
            <person name="Lorentzen M.S."/>
            <person name="Holden M.T."/>
            <person name="Seeger K."/>
            <person name="Paulsen S."/>
            <person name="Bason N."/>
            <person name="Churcher C."/>
            <person name="Harris D."/>
            <person name="Norbertczak H."/>
            <person name="Quail M.A."/>
            <person name="Sanders S."/>
            <person name="Thurston S."/>
            <person name="Parkhill J."/>
            <person name="Willassen N.P."/>
            <person name="Thomson N.R."/>
        </authorList>
    </citation>
    <scope>NUCLEOTIDE SEQUENCE [LARGE SCALE GENOMIC DNA]</scope>
    <source>
        <strain>LFI1238</strain>
    </source>
</reference>
<sequence>MIGRLRGNLLEKQPPELLIEVSGIGYEVQMPMSCFYELPPIGTEAIIYIHYVVREDAQLLYGFNTKKERALFREVIKANGVGPKLGLAILSGMTASQFVQSVEREDISTLVKLPGVGKKTAERLVVEMKDRLKGWGAGDLFTPADTTSMDDASDLISSPQSAQDEAVSALISLGYKPVQASKMVSQVAKPDMTSESLIRESLKSMI</sequence>
<proteinExistence type="inferred from homology"/>
<evidence type="ECO:0000255" key="1">
    <source>
        <dbReference type="HAMAP-Rule" id="MF_00031"/>
    </source>
</evidence>
<name>RUVA_ALISL</name>
<feature type="chain" id="PRO_1000090276" description="Holliday junction branch migration complex subunit RuvA">
    <location>
        <begin position="1"/>
        <end position="206"/>
    </location>
</feature>
<feature type="region of interest" description="Domain I" evidence="1">
    <location>
        <begin position="1"/>
        <end position="64"/>
    </location>
</feature>
<feature type="region of interest" description="Domain II" evidence="1">
    <location>
        <begin position="65"/>
        <end position="143"/>
    </location>
</feature>
<feature type="region of interest" description="Flexible linker" evidence="1">
    <location>
        <begin position="144"/>
        <end position="157"/>
    </location>
</feature>
<feature type="region of interest" description="Domain III" evidence="1">
    <location>
        <begin position="158"/>
        <end position="206"/>
    </location>
</feature>
<comment type="function">
    <text evidence="1">The RuvA-RuvB-RuvC complex processes Holliday junction (HJ) DNA during genetic recombination and DNA repair, while the RuvA-RuvB complex plays an important role in the rescue of blocked DNA replication forks via replication fork reversal (RFR). RuvA specifically binds to HJ cruciform DNA, conferring on it an open structure. The RuvB hexamer acts as an ATP-dependent pump, pulling dsDNA into and through the RuvAB complex. HJ branch migration allows RuvC to scan DNA until it finds its consensus sequence, where it cleaves and resolves the cruciform DNA.</text>
</comment>
<comment type="subunit">
    <text evidence="1">Homotetramer. Forms an RuvA(8)-RuvB(12)-Holliday junction (HJ) complex. HJ DNA is sandwiched between 2 RuvA tetramers; dsDNA enters through RuvA and exits via RuvB. An RuvB hexamer assembles on each DNA strand where it exits the tetramer. Each RuvB hexamer is contacted by two RuvA subunits (via domain III) on 2 adjacent RuvB subunits; this complex drives branch migration. In the full resolvosome a probable DNA-RuvA(4)-RuvB(12)-RuvC(2) complex forms which resolves the HJ.</text>
</comment>
<comment type="subcellular location">
    <subcellularLocation>
        <location evidence="1">Cytoplasm</location>
    </subcellularLocation>
</comment>
<comment type="domain">
    <text evidence="1">Has three domains with a flexible linker between the domains II and III and assumes an 'L' shape. Domain III is highly mobile and contacts RuvB.</text>
</comment>
<comment type="similarity">
    <text evidence="1">Belongs to the RuvA family.</text>
</comment>
<organism>
    <name type="scientific">Aliivibrio salmonicida (strain LFI1238)</name>
    <name type="common">Vibrio salmonicida (strain LFI1238)</name>
    <dbReference type="NCBI Taxonomy" id="316275"/>
    <lineage>
        <taxon>Bacteria</taxon>
        <taxon>Pseudomonadati</taxon>
        <taxon>Pseudomonadota</taxon>
        <taxon>Gammaproteobacteria</taxon>
        <taxon>Vibrionales</taxon>
        <taxon>Vibrionaceae</taxon>
        <taxon>Aliivibrio</taxon>
    </lineage>
</organism>
<gene>
    <name evidence="1" type="primary">ruvA</name>
    <name type="ordered locus">VSAL_I1888</name>
</gene>
<dbReference type="EMBL" id="FM178379">
    <property type="protein sequence ID" value="CAQ79573.1"/>
    <property type="molecule type" value="Genomic_DNA"/>
</dbReference>
<dbReference type="RefSeq" id="WP_012550463.1">
    <property type="nucleotide sequence ID" value="NC_011312.1"/>
</dbReference>
<dbReference type="SMR" id="B6EGJ3"/>
<dbReference type="KEGG" id="vsa:VSAL_I1888"/>
<dbReference type="eggNOG" id="COG0632">
    <property type="taxonomic scope" value="Bacteria"/>
</dbReference>
<dbReference type="HOGENOM" id="CLU_087936_0_0_6"/>
<dbReference type="Proteomes" id="UP000001730">
    <property type="component" value="Chromosome 1"/>
</dbReference>
<dbReference type="GO" id="GO:0005737">
    <property type="term" value="C:cytoplasm"/>
    <property type="evidence" value="ECO:0007669"/>
    <property type="project" value="UniProtKB-SubCell"/>
</dbReference>
<dbReference type="GO" id="GO:0009379">
    <property type="term" value="C:Holliday junction helicase complex"/>
    <property type="evidence" value="ECO:0007669"/>
    <property type="project" value="InterPro"/>
</dbReference>
<dbReference type="GO" id="GO:0048476">
    <property type="term" value="C:Holliday junction resolvase complex"/>
    <property type="evidence" value="ECO:0007669"/>
    <property type="project" value="UniProtKB-UniRule"/>
</dbReference>
<dbReference type="GO" id="GO:0005524">
    <property type="term" value="F:ATP binding"/>
    <property type="evidence" value="ECO:0007669"/>
    <property type="project" value="InterPro"/>
</dbReference>
<dbReference type="GO" id="GO:0000400">
    <property type="term" value="F:four-way junction DNA binding"/>
    <property type="evidence" value="ECO:0007669"/>
    <property type="project" value="UniProtKB-UniRule"/>
</dbReference>
<dbReference type="GO" id="GO:0009378">
    <property type="term" value="F:four-way junction helicase activity"/>
    <property type="evidence" value="ECO:0007669"/>
    <property type="project" value="InterPro"/>
</dbReference>
<dbReference type="GO" id="GO:0006310">
    <property type="term" value="P:DNA recombination"/>
    <property type="evidence" value="ECO:0007669"/>
    <property type="project" value="UniProtKB-UniRule"/>
</dbReference>
<dbReference type="GO" id="GO:0006281">
    <property type="term" value="P:DNA repair"/>
    <property type="evidence" value="ECO:0007669"/>
    <property type="project" value="UniProtKB-UniRule"/>
</dbReference>
<dbReference type="CDD" id="cd14332">
    <property type="entry name" value="UBA_RuvA_C"/>
    <property type="match status" value="1"/>
</dbReference>
<dbReference type="FunFam" id="1.10.150.20:FF:000012">
    <property type="entry name" value="Holliday junction ATP-dependent DNA helicase RuvA"/>
    <property type="match status" value="1"/>
</dbReference>
<dbReference type="FunFam" id="2.40.50.140:FF:000083">
    <property type="entry name" value="Holliday junction ATP-dependent DNA helicase RuvA"/>
    <property type="match status" value="1"/>
</dbReference>
<dbReference type="Gene3D" id="1.10.150.20">
    <property type="entry name" value="5' to 3' exonuclease, C-terminal subdomain"/>
    <property type="match status" value="1"/>
</dbReference>
<dbReference type="Gene3D" id="1.10.8.10">
    <property type="entry name" value="DNA helicase RuvA subunit, C-terminal domain"/>
    <property type="match status" value="1"/>
</dbReference>
<dbReference type="Gene3D" id="2.40.50.140">
    <property type="entry name" value="Nucleic acid-binding proteins"/>
    <property type="match status" value="1"/>
</dbReference>
<dbReference type="HAMAP" id="MF_00031">
    <property type="entry name" value="DNA_HJ_migration_RuvA"/>
    <property type="match status" value="1"/>
</dbReference>
<dbReference type="InterPro" id="IPR013849">
    <property type="entry name" value="DNA_helicase_Holl-junc_RuvA_I"/>
</dbReference>
<dbReference type="InterPro" id="IPR003583">
    <property type="entry name" value="Hlx-hairpin-Hlx_DNA-bd_motif"/>
</dbReference>
<dbReference type="InterPro" id="IPR012340">
    <property type="entry name" value="NA-bd_OB-fold"/>
</dbReference>
<dbReference type="InterPro" id="IPR000085">
    <property type="entry name" value="RuvA"/>
</dbReference>
<dbReference type="InterPro" id="IPR010994">
    <property type="entry name" value="RuvA_2-like"/>
</dbReference>
<dbReference type="InterPro" id="IPR011114">
    <property type="entry name" value="RuvA_C"/>
</dbReference>
<dbReference type="InterPro" id="IPR036267">
    <property type="entry name" value="RuvA_C_sf"/>
</dbReference>
<dbReference type="NCBIfam" id="TIGR00084">
    <property type="entry name" value="ruvA"/>
    <property type="match status" value="1"/>
</dbReference>
<dbReference type="Pfam" id="PF14520">
    <property type="entry name" value="HHH_5"/>
    <property type="match status" value="1"/>
</dbReference>
<dbReference type="Pfam" id="PF07499">
    <property type="entry name" value="RuvA_C"/>
    <property type="match status" value="1"/>
</dbReference>
<dbReference type="Pfam" id="PF01330">
    <property type="entry name" value="RuvA_N"/>
    <property type="match status" value="1"/>
</dbReference>
<dbReference type="SMART" id="SM00278">
    <property type="entry name" value="HhH1"/>
    <property type="match status" value="2"/>
</dbReference>
<dbReference type="SUPFAM" id="SSF46929">
    <property type="entry name" value="DNA helicase RuvA subunit, C-terminal domain"/>
    <property type="match status" value="1"/>
</dbReference>
<dbReference type="SUPFAM" id="SSF50249">
    <property type="entry name" value="Nucleic acid-binding proteins"/>
    <property type="match status" value="1"/>
</dbReference>
<dbReference type="SUPFAM" id="SSF47781">
    <property type="entry name" value="RuvA domain 2-like"/>
    <property type="match status" value="1"/>
</dbReference>
<keyword id="KW-0963">Cytoplasm</keyword>
<keyword id="KW-0227">DNA damage</keyword>
<keyword id="KW-0233">DNA recombination</keyword>
<keyword id="KW-0234">DNA repair</keyword>
<keyword id="KW-0238">DNA-binding</keyword>